<feature type="chain" id="PRO_0000451152" description="Transcription factor nsy-7">
    <location>
        <begin position="1"/>
        <end position="294"/>
    </location>
</feature>
<feature type="DNA-binding region" description="Homeobox; atypical" evidence="7">
    <location>
        <begin position="192"/>
        <end position="232"/>
    </location>
</feature>
<feature type="region of interest" description="Disordered" evidence="1">
    <location>
        <begin position="43"/>
        <end position="119"/>
    </location>
</feature>
<feature type="region of interest" description="Disordered" evidence="1">
    <location>
        <begin position="167"/>
        <end position="191"/>
    </location>
</feature>
<feature type="region of interest" description="Disordered" evidence="1">
    <location>
        <begin position="238"/>
        <end position="274"/>
    </location>
</feature>
<feature type="compositionally biased region" description="Polar residues" evidence="1">
    <location>
        <begin position="52"/>
        <end position="63"/>
    </location>
</feature>
<feature type="compositionally biased region" description="Polar residues" evidence="1">
    <location>
        <begin position="81"/>
        <end position="115"/>
    </location>
</feature>
<feature type="compositionally biased region" description="Basic and acidic residues" evidence="1">
    <location>
        <begin position="250"/>
        <end position="265"/>
    </location>
</feature>
<feature type="splice variant" id="VSP_060757" description="In isoform b." evidence="6">
    <location>
        <begin position="136"/>
        <end position="150"/>
    </location>
</feature>
<feature type="mutagenesis site" description="In ky630; initiates but fails to maintain AWC asymmetry in L1 larvae. Adults fail to express the G protein-coupled receptor gene str-2 in either AWC neuron. Mild defect in butanone chemotaxis, normal for chemotaxis to 2,3-pentanedione." evidence="2">
    <original>H</original>
    <variation>Y</variation>
    <location>
        <position position="179"/>
    </location>
</feature>
<proteinExistence type="evidence at protein level"/>
<evidence type="ECO:0000256" key="1">
    <source>
        <dbReference type="SAM" id="MobiDB-lite"/>
    </source>
</evidence>
<evidence type="ECO:0000269" key="2">
    <source>
    </source>
</evidence>
<evidence type="ECO:0000269" key="3">
    <source>
    </source>
</evidence>
<evidence type="ECO:0000269" key="4">
    <source>
    </source>
</evidence>
<evidence type="ECO:0000303" key="5">
    <source>
    </source>
</evidence>
<evidence type="ECO:0000305" key="6"/>
<evidence type="ECO:0000305" key="7">
    <source>
    </source>
</evidence>
<evidence type="ECO:0000305" key="8">
    <source>
    </source>
</evidence>
<evidence type="ECO:0000312" key="9">
    <source>
        <dbReference type="Proteomes" id="UP000001940"/>
    </source>
</evidence>
<evidence type="ECO:0000312" key="10">
    <source>
        <dbReference type="WormBase" id="C18F3.4a"/>
    </source>
</evidence>
<evidence type="ECO:0000312" key="11">
    <source>
        <dbReference type="WormBase" id="C18F3.4b"/>
    </source>
</evidence>
<keyword id="KW-0010">Activator</keyword>
<keyword id="KW-0025">Alternative splicing</keyword>
<keyword id="KW-0238">DNA-binding</keyword>
<keyword id="KW-0539">Nucleus</keyword>
<keyword id="KW-1185">Reference proteome</keyword>
<keyword id="KW-0678">Repressor</keyword>
<keyword id="KW-0804">Transcription</keyword>
<keyword id="KW-0805">Transcription regulation</keyword>
<reference evidence="9" key="1">
    <citation type="journal article" date="1998" name="Science">
        <title>Genome sequence of the nematode C. elegans: a platform for investigating biology.</title>
        <authorList>
            <consortium name="The C. elegans sequencing consortium"/>
        </authorList>
    </citation>
    <scope>NUCLEOTIDE SEQUENCE [LARGE SCALE GENOMIC DNA]</scope>
    <source>
        <strain evidence="9">Bristol N2</strain>
    </source>
</reference>
<reference evidence="6" key="2">
    <citation type="journal article" date="2009" name="Genes Dev.">
        <title>Transcriptional regulation and stabilization of left-right neuronal identity in C. elegans.</title>
        <authorList>
            <person name="Lesch B.J."/>
            <person name="Gehrke A.R."/>
            <person name="Bulyk M.L."/>
            <person name="Bargmann C.I."/>
        </authorList>
    </citation>
    <scope>FUNCTION</scope>
    <scope>SUBCELLULAR LOCATION</scope>
    <scope>TISSUE SPECIFICITY</scope>
    <scope>DEVELOPMENTAL STAGE</scope>
    <scope>DISRUPTION PHENOTYPE</scope>
    <scope>DNA-BINDING</scope>
    <scope>MUTAGENESIS OF HIS-179</scope>
</reference>
<reference evidence="6" key="3">
    <citation type="journal article" date="2010" name="Genes Dev.">
        <title>The homeodomain protein hmbx-1 maintains asymmetric gene expression in adult C. elegans olfactory neurons.</title>
        <authorList>
            <person name="Lesch B.J."/>
            <person name="Bargmann C.I."/>
        </authorList>
    </citation>
    <scope>FUNCTION</scope>
</reference>
<reference evidence="6" key="4">
    <citation type="journal article" date="2019" name="Proc. Natl. Acad. Sci. U.S.A.">
        <title>A universal transportin protein drives stochastic choice of olfactory neurons via specific nuclear import of a sox-2-activating factor.</title>
        <authorList>
            <person name="Alqadah A."/>
            <person name="Hsieh Y.W."/>
            <person name="Xiong R."/>
            <person name="Lesch B.J."/>
            <person name="Chang C."/>
            <person name="Chuang C.F."/>
        </authorList>
    </citation>
    <scope>FUNCTION</scope>
    <scope>SUBCELLULAR LOCATION</scope>
    <scope>TISSUE SPECIFICITY</scope>
</reference>
<dbReference type="EMBL" id="BX284604">
    <property type="protein sequence ID" value="CCD65188.1"/>
    <property type="molecule type" value="Genomic_DNA"/>
</dbReference>
<dbReference type="EMBL" id="BX284604">
    <property type="protein sequence ID" value="CCD65189.2"/>
    <property type="molecule type" value="Genomic_DNA"/>
</dbReference>
<dbReference type="RefSeq" id="NP_001255309.1">
    <molecule id="H2KYW5-1"/>
    <property type="nucleotide sequence ID" value="NM_001268380.2"/>
</dbReference>
<dbReference type="RefSeq" id="NP_001255310.2">
    <molecule id="H2KYW5-2"/>
    <property type="nucleotide sequence ID" value="NM_001268381.4"/>
</dbReference>
<dbReference type="SMR" id="H2KYW5"/>
<dbReference type="FunCoup" id="H2KYW5">
    <property type="interactions" value="565"/>
</dbReference>
<dbReference type="IntAct" id="H2KYW5">
    <property type="interactions" value="3"/>
</dbReference>
<dbReference type="STRING" id="6239.C18F3.4a.1"/>
<dbReference type="PaxDb" id="6239-C18F3.4a"/>
<dbReference type="EnsemblMetazoa" id="C18F3.4a.1">
    <molecule id="H2KYW5-1"/>
    <property type="protein sequence ID" value="C18F3.4a.1"/>
    <property type="gene ID" value="WBGene00044508"/>
</dbReference>
<dbReference type="EnsemblMetazoa" id="C18F3.4b.1">
    <molecule id="H2KYW5-2"/>
    <property type="protein sequence ID" value="C18F3.4b.1"/>
    <property type="gene ID" value="WBGene00044508"/>
</dbReference>
<dbReference type="GeneID" id="3896760"/>
<dbReference type="KEGG" id="cel:CELE_C18F3.4"/>
<dbReference type="AGR" id="WB:WBGene00044508"/>
<dbReference type="CTD" id="3896760"/>
<dbReference type="WormBase" id="C18F3.4a">
    <molecule id="H2KYW5-1"/>
    <property type="protein sequence ID" value="CE42065"/>
    <property type="gene ID" value="WBGene00044508"/>
    <property type="gene designation" value="nsy-7"/>
</dbReference>
<dbReference type="WormBase" id="C18F3.4b">
    <molecule id="H2KYW5-2"/>
    <property type="protein sequence ID" value="CE49558"/>
    <property type="gene ID" value="WBGene00044508"/>
    <property type="gene designation" value="nsy-7"/>
</dbReference>
<dbReference type="eggNOG" id="ENOG502TG34">
    <property type="taxonomic scope" value="Eukaryota"/>
</dbReference>
<dbReference type="HOGENOM" id="CLU_947422_0_0_1"/>
<dbReference type="InParanoid" id="H2KYW5"/>
<dbReference type="OMA" id="QFVSNHS"/>
<dbReference type="OrthoDB" id="5850062at2759"/>
<dbReference type="SignaLink" id="H2KYW5"/>
<dbReference type="PRO" id="PR:H2KYW5"/>
<dbReference type="Proteomes" id="UP000001940">
    <property type="component" value="Chromosome IV"/>
</dbReference>
<dbReference type="Bgee" id="WBGene00044508">
    <property type="expression patterns" value="Expressed in embryo and 3 other cell types or tissues"/>
</dbReference>
<dbReference type="ExpressionAtlas" id="H2KYW5">
    <property type="expression patterns" value="baseline and differential"/>
</dbReference>
<dbReference type="GO" id="GO:0005634">
    <property type="term" value="C:nucleus"/>
    <property type="evidence" value="ECO:0000314"/>
    <property type="project" value="WormBase"/>
</dbReference>
<dbReference type="GO" id="GO:0043565">
    <property type="term" value="F:sequence-specific DNA binding"/>
    <property type="evidence" value="ECO:0000314"/>
    <property type="project" value="WormBase"/>
</dbReference>
<dbReference type="GO" id="GO:0035545">
    <property type="term" value="P:determination of left/right asymmetry in nervous system"/>
    <property type="evidence" value="ECO:0000315"/>
    <property type="project" value="WormBase"/>
</dbReference>
<dbReference type="GO" id="GO:0000122">
    <property type="term" value="P:negative regulation of transcription by RNA polymerase II"/>
    <property type="evidence" value="ECO:0000315"/>
    <property type="project" value="WormBase"/>
</dbReference>
<dbReference type="CDD" id="cd00086">
    <property type="entry name" value="homeodomain"/>
    <property type="match status" value="1"/>
</dbReference>
<dbReference type="InterPro" id="IPR001356">
    <property type="entry name" value="HD"/>
</dbReference>
<organism evidence="9">
    <name type="scientific">Caenorhabditis elegans</name>
    <dbReference type="NCBI Taxonomy" id="6239"/>
    <lineage>
        <taxon>Eukaryota</taxon>
        <taxon>Metazoa</taxon>
        <taxon>Ecdysozoa</taxon>
        <taxon>Nematoda</taxon>
        <taxon>Chromadorea</taxon>
        <taxon>Rhabditida</taxon>
        <taxon>Rhabditina</taxon>
        <taxon>Rhabditomorpha</taxon>
        <taxon>Rhabditoidea</taxon>
        <taxon>Rhabditidae</taxon>
        <taxon>Peloderinae</taxon>
        <taxon>Caenorhabditis</taxon>
    </lineage>
</organism>
<accession>H2KYW5</accession>
<accession>C1P623</accession>
<gene>
    <name evidence="10" type="primary">nsy-7</name>
    <name evidence="10" type="ORF">C18F3.4</name>
</gene>
<comment type="function">
    <text evidence="2 3 4">Transcriptional regulator which binds DNA consensus sequence 5'-CCTTAAC-3' (PubMed:19204119, PubMed:31767767). Plays a role in establishing and maintaining asymmetric cell fates in chemosensory AWC neurons during larval neuronal development (PubMed:19204119, PubMed:20713521, PubMed:31767767). This is achieved by repressing the expression of multiple AWC (OFF) genes, including srsx-3 and hlh-11 in the AWC (ON) neuron (PubMed:19204119). Activates expression of sox-2 in the AWC (ON) neuron (PubMed:31767767).</text>
</comment>
<comment type="subcellular location">
    <subcellularLocation>
        <location evidence="7 8">Nucleus</location>
    </subcellularLocation>
</comment>
<comment type="alternative products">
    <event type="alternative splicing"/>
    <isoform>
        <id>H2KYW5-1</id>
        <name evidence="10">a</name>
        <sequence type="displayed"/>
    </isoform>
    <isoform>
        <id>H2KYW5-2</id>
        <name evidence="11">b</name>
        <sequence type="described" ref="VSP_060757"/>
    </isoform>
</comment>
<comment type="tissue specificity">
    <text evidence="2 4">Expressed widely, including gut, the amphid sheath glial cells, and head and tail neurons including AWC, ASE, and ASH (PubMed:19204119). Expressed in AWC (ON) olfactory neuron but not AWC (OFF) (PubMed:19204119, PubMed:31767767).</text>
</comment>
<comment type="developmental stage">
    <text evidence="2">At the threefold embryonic stage, expressed asymmetrically in one of the two AWC neurons (PubMed:19204119). A subset of embryos show bilateral expression in AWC neurons, but this declines after larval stage L1 (PubMed:19204119).</text>
</comment>
<comment type="disruption phenotype">
    <text evidence="2">RNAi-mediated knockdown leads to misexpression of markers of the asymmetric state of AWC neurons.</text>
</comment>
<sequence>MSSDTKYKYAVVRIPETSVVDFFSLIVAKGYSDVSFVASLSQCNLRDDPNDDQPTTSSNSVKESINDDESNSENNKLSPPRRQSNPHSSLPAISSSTVKNEPTDSWTPSALSNDPTPDLLSATVPAELLTNLFAKTKSTEPKPQQLFGFQASGVDFDLSNNEWHENLRLPNGNGTEKYHPYGGNSKNDSPLQTRMKGWQREYIKEVIKDSHYPTEEELRDIEQKCDLSRKQILRFIAKRLTNPNRKPRVNHHDEKRKEQEERDSLADPDDDMINDNEAVTNLHHILNSLQETTA</sequence>
<protein>
    <recommendedName>
        <fullName evidence="5">Transcription factor nsy-7</fullName>
    </recommendedName>
    <alternativeName>
        <fullName evidence="10">Neuronal symmetry protein 7</fullName>
    </alternativeName>
</protein>
<name>NSY7_CAEEL</name>